<evidence type="ECO:0000255" key="1">
    <source>
        <dbReference type="HAMAP-Rule" id="MF_00071"/>
    </source>
</evidence>
<gene>
    <name evidence="1" type="primary">lepA</name>
    <name type="ordered locus">Ping_0638</name>
</gene>
<keyword id="KW-0997">Cell inner membrane</keyword>
<keyword id="KW-1003">Cell membrane</keyword>
<keyword id="KW-0342">GTP-binding</keyword>
<keyword id="KW-0378">Hydrolase</keyword>
<keyword id="KW-0472">Membrane</keyword>
<keyword id="KW-0547">Nucleotide-binding</keyword>
<keyword id="KW-0648">Protein biosynthesis</keyword>
<keyword id="KW-1185">Reference proteome</keyword>
<protein>
    <recommendedName>
        <fullName evidence="1">Elongation factor 4</fullName>
        <shortName evidence="1">EF-4</shortName>
        <ecNumber evidence="1">3.6.5.n1</ecNumber>
    </recommendedName>
    <alternativeName>
        <fullName evidence="1">Ribosomal back-translocase LepA</fullName>
    </alternativeName>
</protein>
<sequence>MKNIRNFSIIAHIDHGKSTLSDRLINTCGGLSDREMESQVLDSMDIERERGITIKAQSVTLDYHAKDGETYQLNFIDTPGHVDFAYEVSRSLAACEGALLVVDAGQGVEAQTLANCYTAMEMNLEVVPILNKIDLPAADPDRVAKEIEDIIGIDAADAVRCSAKTGVGIDLVLEEIVRCIPPPVGDLTGPLQALIIDSWFDNYQGVVSLVRVMHGQIKVGDRMKVMSTGQVNPVAKVGYFTPKQKETGILKAGEVGYVIAGIKDILGAPVGDTLTISGHEAAKALPGFKRAKPQVYAGLFPVSSDDYENFRDALAKLSINDASLFYEPENSSALGFGFRCGFLGLLHMEIVQERLEREYDLNLITTAPTVVYEVETTRGEVLHIDSPAKFPAMNDIEEIREPIAECNILVPQEYLGNVITLCVQKRGMQTKMVYHGKQVALTYHIPMGEVVMDFFDRLKSTSRGYASLEYNFVKFEAADMVRVDVLINSERVDALALITHRANSESYGRDLVDKMKDLIPRQMFNIALQAAIGSKIIARSTVKQLTKNVLAKCYGGDISRKKKLLKKQKEGKKRMKSVGNVDIPQEAFLAVLHIGKDK</sequence>
<comment type="function">
    <text evidence="1">Required for accurate and efficient protein synthesis under certain stress conditions. May act as a fidelity factor of the translation reaction, by catalyzing a one-codon backward translocation of tRNAs on improperly translocated ribosomes. Back-translocation proceeds from a post-translocation (POST) complex to a pre-translocation (PRE) complex, thus giving elongation factor G a second chance to translocate the tRNAs correctly. Binds to ribosomes in a GTP-dependent manner.</text>
</comment>
<comment type="catalytic activity">
    <reaction evidence="1">
        <text>GTP + H2O = GDP + phosphate + H(+)</text>
        <dbReference type="Rhea" id="RHEA:19669"/>
        <dbReference type="ChEBI" id="CHEBI:15377"/>
        <dbReference type="ChEBI" id="CHEBI:15378"/>
        <dbReference type="ChEBI" id="CHEBI:37565"/>
        <dbReference type="ChEBI" id="CHEBI:43474"/>
        <dbReference type="ChEBI" id="CHEBI:58189"/>
        <dbReference type="EC" id="3.6.5.n1"/>
    </reaction>
</comment>
<comment type="subcellular location">
    <subcellularLocation>
        <location evidence="1">Cell inner membrane</location>
        <topology evidence="1">Peripheral membrane protein</topology>
        <orientation evidence="1">Cytoplasmic side</orientation>
    </subcellularLocation>
</comment>
<comment type="similarity">
    <text evidence="1">Belongs to the TRAFAC class translation factor GTPase superfamily. Classic translation factor GTPase family. LepA subfamily.</text>
</comment>
<organism>
    <name type="scientific">Psychromonas ingrahamii (strain DSM 17664 / CCUG 51855 / 37)</name>
    <dbReference type="NCBI Taxonomy" id="357804"/>
    <lineage>
        <taxon>Bacteria</taxon>
        <taxon>Pseudomonadati</taxon>
        <taxon>Pseudomonadota</taxon>
        <taxon>Gammaproteobacteria</taxon>
        <taxon>Alteromonadales</taxon>
        <taxon>Psychromonadaceae</taxon>
        <taxon>Psychromonas</taxon>
    </lineage>
</organism>
<proteinExistence type="inferred from homology"/>
<accession>A1SSM6</accession>
<reference key="1">
    <citation type="journal article" date="2008" name="BMC Genomics">
        <title>Genomics of an extreme psychrophile, Psychromonas ingrahamii.</title>
        <authorList>
            <person name="Riley M."/>
            <person name="Staley J.T."/>
            <person name="Danchin A."/>
            <person name="Wang T.Z."/>
            <person name="Brettin T.S."/>
            <person name="Hauser L.J."/>
            <person name="Land M.L."/>
            <person name="Thompson L.S."/>
        </authorList>
    </citation>
    <scope>NUCLEOTIDE SEQUENCE [LARGE SCALE GENOMIC DNA]</scope>
    <source>
        <strain>DSM 17664 / CCUG 51855 / 37</strain>
    </source>
</reference>
<feature type="chain" id="PRO_1000057478" description="Elongation factor 4">
    <location>
        <begin position="1"/>
        <end position="598"/>
    </location>
</feature>
<feature type="domain" description="tr-type G">
    <location>
        <begin position="2"/>
        <end position="184"/>
    </location>
</feature>
<feature type="binding site" evidence="1">
    <location>
        <begin position="14"/>
        <end position="19"/>
    </location>
    <ligand>
        <name>GTP</name>
        <dbReference type="ChEBI" id="CHEBI:37565"/>
    </ligand>
</feature>
<feature type="binding site" evidence="1">
    <location>
        <begin position="131"/>
        <end position="134"/>
    </location>
    <ligand>
        <name>GTP</name>
        <dbReference type="ChEBI" id="CHEBI:37565"/>
    </ligand>
</feature>
<dbReference type="EC" id="3.6.5.n1" evidence="1"/>
<dbReference type="EMBL" id="CP000510">
    <property type="protein sequence ID" value="ABM02491.1"/>
    <property type="molecule type" value="Genomic_DNA"/>
</dbReference>
<dbReference type="RefSeq" id="WP_011769050.1">
    <property type="nucleotide sequence ID" value="NC_008709.1"/>
</dbReference>
<dbReference type="SMR" id="A1SSM6"/>
<dbReference type="STRING" id="357804.Ping_0638"/>
<dbReference type="KEGG" id="pin:Ping_0638"/>
<dbReference type="eggNOG" id="COG0481">
    <property type="taxonomic scope" value="Bacteria"/>
</dbReference>
<dbReference type="HOGENOM" id="CLU_009995_3_3_6"/>
<dbReference type="OrthoDB" id="9804431at2"/>
<dbReference type="Proteomes" id="UP000000639">
    <property type="component" value="Chromosome"/>
</dbReference>
<dbReference type="GO" id="GO:0005886">
    <property type="term" value="C:plasma membrane"/>
    <property type="evidence" value="ECO:0007669"/>
    <property type="project" value="UniProtKB-SubCell"/>
</dbReference>
<dbReference type="GO" id="GO:0005525">
    <property type="term" value="F:GTP binding"/>
    <property type="evidence" value="ECO:0007669"/>
    <property type="project" value="UniProtKB-UniRule"/>
</dbReference>
<dbReference type="GO" id="GO:0003924">
    <property type="term" value="F:GTPase activity"/>
    <property type="evidence" value="ECO:0007669"/>
    <property type="project" value="UniProtKB-UniRule"/>
</dbReference>
<dbReference type="GO" id="GO:0097216">
    <property type="term" value="F:guanosine tetraphosphate binding"/>
    <property type="evidence" value="ECO:0007669"/>
    <property type="project" value="UniProtKB-ARBA"/>
</dbReference>
<dbReference type="GO" id="GO:0043022">
    <property type="term" value="F:ribosome binding"/>
    <property type="evidence" value="ECO:0007669"/>
    <property type="project" value="UniProtKB-UniRule"/>
</dbReference>
<dbReference type="GO" id="GO:0003746">
    <property type="term" value="F:translation elongation factor activity"/>
    <property type="evidence" value="ECO:0007669"/>
    <property type="project" value="UniProtKB-UniRule"/>
</dbReference>
<dbReference type="GO" id="GO:0045727">
    <property type="term" value="P:positive regulation of translation"/>
    <property type="evidence" value="ECO:0007669"/>
    <property type="project" value="UniProtKB-UniRule"/>
</dbReference>
<dbReference type="CDD" id="cd03699">
    <property type="entry name" value="EF4_II"/>
    <property type="match status" value="1"/>
</dbReference>
<dbReference type="CDD" id="cd16260">
    <property type="entry name" value="EF4_III"/>
    <property type="match status" value="1"/>
</dbReference>
<dbReference type="CDD" id="cd01890">
    <property type="entry name" value="LepA"/>
    <property type="match status" value="1"/>
</dbReference>
<dbReference type="CDD" id="cd03709">
    <property type="entry name" value="lepA_C"/>
    <property type="match status" value="1"/>
</dbReference>
<dbReference type="FunFam" id="3.40.50.300:FF:000078">
    <property type="entry name" value="Elongation factor 4"/>
    <property type="match status" value="1"/>
</dbReference>
<dbReference type="FunFam" id="2.40.30.10:FF:000015">
    <property type="entry name" value="Translation factor GUF1, mitochondrial"/>
    <property type="match status" value="1"/>
</dbReference>
<dbReference type="FunFam" id="3.30.70.240:FF:000007">
    <property type="entry name" value="Translation factor GUF1, mitochondrial"/>
    <property type="match status" value="1"/>
</dbReference>
<dbReference type="FunFam" id="3.30.70.2570:FF:000001">
    <property type="entry name" value="Translation factor GUF1, mitochondrial"/>
    <property type="match status" value="1"/>
</dbReference>
<dbReference type="FunFam" id="3.30.70.870:FF:000004">
    <property type="entry name" value="Translation factor GUF1, mitochondrial"/>
    <property type="match status" value="1"/>
</dbReference>
<dbReference type="Gene3D" id="3.30.70.240">
    <property type="match status" value="1"/>
</dbReference>
<dbReference type="Gene3D" id="3.30.70.2570">
    <property type="entry name" value="Elongation factor 4, C-terminal domain"/>
    <property type="match status" value="1"/>
</dbReference>
<dbReference type="Gene3D" id="3.30.70.870">
    <property type="entry name" value="Elongation Factor G (Translational Gtpase), domain 3"/>
    <property type="match status" value="1"/>
</dbReference>
<dbReference type="Gene3D" id="3.40.50.300">
    <property type="entry name" value="P-loop containing nucleotide triphosphate hydrolases"/>
    <property type="match status" value="1"/>
</dbReference>
<dbReference type="Gene3D" id="2.40.30.10">
    <property type="entry name" value="Translation factors"/>
    <property type="match status" value="1"/>
</dbReference>
<dbReference type="HAMAP" id="MF_00071">
    <property type="entry name" value="LepA"/>
    <property type="match status" value="1"/>
</dbReference>
<dbReference type="InterPro" id="IPR006297">
    <property type="entry name" value="EF-4"/>
</dbReference>
<dbReference type="InterPro" id="IPR035647">
    <property type="entry name" value="EFG_III/V"/>
</dbReference>
<dbReference type="InterPro" id="IPR000640">
    <property type="entry name" value="EFG_V-like"/>
</dbReference>
<dbReference type="InterPro" id="IPR004161">
    <property type="entry name" value="EFTu-like_2"/>
</dbReference>
<dbReference type="InterPro" id="IPR031157">
    <property type="entry name" value="G_TR_CS"/>
</dbReference>
<dbReference type="InterPro" id="IPR038363">
    <property type="entry name" value="LepA_C_sf"/>
</dbReference>
<dbReference type="InterPro" id="IPR013842">
    <property type="entry name" value="LepA_CTD"/>
</dbReference>
<dbReference type="InterPro" id="IPR035654">
    <property type="entry name" value="LepA_IV"/>
</dbReference>
<dbReference type="InterPro" id="IPR027417">
    <property type="entry name" value="P-loop_NTPase"/>
</dbReference>
<dbReference type="InterPro" id="IPR005225">
    <property type="entry name" value="Small_GTP-bd"/>
</dbReference>
<dbReference type="InterPro" id="IPR000795">
    <property type="entry name" value="T_Tr_GTP-bd_dom"/>
</dbReference>
<dbReference type="NCBIfam" id="TIGR01393">
    <property type="entry name" value="lepA"/>
    <property type="match status" value="1"/>
</dbReference>
<dbReference type="NCBIfam" id="TIGR00231">
    <property type="entry name" value="small_GTP"/>
    <property type="match status" value="1"/>
</dbReference>
<dbReference type="PANTHER" id="PTHR43512:SF4">
    <property type="entry name" value="TRANSLATION FACTOR GUF1 HOMOLOG, CHLOROPLASTIC"/>
    <property type="match status" value="1"/>
</dbReference>
<dbReference type="PANTHER" id="PTHR43512">
    <property type="entry name" value="TRANSLATION FACTOR GUF1-RELATED"/>
    <property type="match status" value="1"/>
</dbReference>
<dbReference type="Pfam" id="PF00679">
    <property type="entry name" value="EFG_C"/>
    <property type="match status" value="1"/>
</dbReference>
<dbReference type="Pfam" id="PF00009">
    <property type="entry name" value="GTP_EFTU"/>
    <property type="match status" value="1"/>
</dbReference>
<dbReference type="Pfam" id="PF03144">
    <property type="entry name" value="GTP_EFTU_D2"/>
    <property type="match status" value="1"/>
</dbReference>
<dbReference type="Pfam" id="PF06421">
    <property type="entry name" value="LepA_C"/>
    <property type="match status" value="1"/>
</dbReference>
<dbReference type="PRINTS" id="PR00315">
    <property type="entry name" value="ELONGATNFCT"/>
</dbReference>
<dbReference type="SMART" id="SM00838">
    <property type="entry name" value="EFG_C"/>
    <property type="match status" value="1"/>
</dbReference>
<dbReference type="SUPFAM" id="SSF54980">
    <property type="entry name" value="EF-G C-terminal domain-like"/>
    <property type="match status" value="2"/>
</dbReference>
<dbReference type="SUPFAM" id="SSF52540">
    <property type="entry name" value="P-loop containing nucleoside triphosphate hydrolases"/>
    <property type="match status" value="1"/>
</dbReference>
<dbReference type="PROSITE" id="PS00301">
    <property type="entry name" value="G_TR_1"/>
    <property type="match status" value="1"/>
</dbReference>
<dbReference type="PROSITE" id="PS51722">
    <property type="entry name" value="G_TR_2"/>
    <property type="match status" value="1"/>
</dbReference>
<name>LEPA_PSYIN</name>